<keyword id="KW-0378">Hydrolase</keyword>
<keyword id="KW-0460">Magnesium</keyword>
<keyword id="KW-0479">Metal-binding</keyword>
<organism>
    <name type="scientific">Listeria monocytogenes serotype 4a (strain HCC23)</name>
    <dbReference type="NCBI Taxonomy" id="552536"/>
    <lineage>
        <taxon>Bacteria</taxon>
        <taxon>Bacillati</taxon>
        <taxon>Bacillota</taxon>
        <taxon>Bacilli</taxon>
        <taxon>Bacillales</taxon>
        <taxon>Listeriaceae</taxon>
        <taxon>Listeria</taxon>
    </lineage>
</organism>
<sequence length="175" mass="21134">MYLPKEKEIIQIKSYKHNGKLHRTWKKTVVLKSTENIIIGGNDHTLVVEADGRKWVTREPSICYFHSDYWFNVISMIREDGIYHYCNLGTPFAVDEQALKYIDYDLDIKVFPDGRFHLLDEGEYEQHRRQMKYPDSIDRILRHNVDVLSHWILDKKGPFSPDYIDIWYEKYKEYR</sequence>
<feature type="chain" id="PRO_1000185472" description="Nucleoside triphosphate/diphosphate phosphatase">
    <location>
        <begin position="1"/>
        <end position="175"/>
    </location>
</feature>
<feature type="active site" description="Proton donor" evidence="1">
    <location>
        <position position="23"/>
    </location>
</feature>
<feature type="binding site" evidence="1">
    <location>
        <position position="87"/>
    </location>
    <ligand>
        <name>Mg(2+)</name>
        <dbReference type="ChEBI" id="CHEBI:18420"/>
        <label>1</label>
    </ligand>
</feature>
<feature type="binding site" evidence="1">
    <location>
        <position position="103"/>
    </location>
    <ligand>
        <name>Mg(2+)</name>
        <dbReference type="ChEBI" id="CHEBI:18420"/>
        <label>1</label>
    </ligand>
</feature>
<feature type="binding site" evidence="1">
    <location>
        <position position="105"/>
    </location>
    <ligand>
        <name>Mg(2+)</name>
        <dbReference type="ChEBI" id="CHEBI:18420"/>
        <label>2</label>
    </ligand>
</feature>
<feature type="binding site" evidence="1">
    <location>
        <position position="107"/>
    </location>
    <ligand>
        <name>Mg(2+)</name>
        <dbReference type="ChEBI" id="CHEBI:18420"/>
        <label>1</label>
    </ligand>
</feature>
<feature type="binding site" evidence="1">
    <location>
        <position position="107"/>
    </location>
    <ligand>
        <name>Mg(2+)</name>
        <dbReference type="ChEBI" id="CHEBI:18420"/>
        <label>2</label>
    </ligand>
</feature>
<feature type="binding site" evidence="1">
    <location>
        <position position="120"/>
    </location>
    <ligand>
        <name>Mg(2+)</name>
        <dbReference type="ChEBI" id="CHEBI:18420"/>
        <label>2</label>
    </ligand>
</feature>
<feature type="binding site" evidence="1">
    <location>
        <position position="123"/>
    </location>
    <ligand>
        <name>Mg(2+)</name>
        <dbReference type="ChEBI" id="CHEBI:18420"/>
        <label>2</label>
    </ligand>
</feature>
<proteinExistence type="inferred from homology"/>
<comment type="function">
    <text evidence="1">Has nucleoside phosphatase activity towards nucleoside triphosphates and nucleoside diphosphates.</text>
</comment>
<comment type="catalytic activity">
    <reaction evidence="1">
        <text>a ribonucleoside 5'-triphosphate + H2O = a ribonucleoside 5'-diphosphate + phosphate + H(+)</text>
        <dbReference type="Rhea" id="RHEA:23680"/>
        <dbReference type="ChEBI" id="CHEBI:15377"/>
        <dbReference type="ChEBI" id="CHEBI:15378"/>
        <dbReference type="ChEBI" id="CHEBI:43474"/>
        <dbReference type="ChEBI" id="CHEBI:57930"/>
        <dbReference type="ChEBI" id="CHEBI:61557"/>
        <dbReference type="EC" id="3.6.1.15"/>
    </reaction>
</comment>
<comment type="catalytic activity">
    <reaction evidence="1">
        <text>a ribonucleoside 5'-diphosphate + H2O = a ribonucleoside 5'-phosphate + phosphate + H(+)</text>
        <dbReference type="Rhea" id="RHEA:36799"/>
        <dbReference type="ChEBI" id="CHEBI:15377"/>
        <dbReference type="ChEBI" id="CHEBI:15378"/>
        <dbReference type="ChEBI" id="CHEBI:43474"/>
        <dbReference type="ChEBI" id="CHEBI:57930"/>
        <dbReference type="ChEBI" id="CHEBI:58043"/>
        <dbReference type="EC" id="3.6.1.6"/>
    </reaction>
</comment>
<comment type="cofactor">
    <cofactor evidence="1">
        <name>Mg(2+)</name>
        <dbReference type="ChEBI" id="CHEBI:18420"/>
    </cofactor>
</comment>
<comment type="similarity">
    <text evidence="1">Belongs to the Ntdp family.</text>
</comment>
<accession>B8DFN5</accession>
<name>NTDP_LISMH</name>
<protein>
    <recommendedName>
        <fullName evidence="1">Nucleoside triphosphate/diphosphate phosphatase</fullName>
        <ecNumber evidence="1">3.6.1.15</ecNumber>
        <ecNumber evidence="1">3.6.1.6</ecNumber>
    </recommendedName>
</protein>
<reference key="1">
    <citation type="journal article" date="2011" name="J. Bacteriol.">
        <title>Genome sequence of lineage III Listeria monocytogenes strain HCC23.</title>
        <authorList>
            <person name="Steele C.L."/>
            <person name="Donaldson J.R."/>
            <person name="Paul D."/>
            <person name="Banes M.M."/>
            <person name="Arick T."/>
            <person name="Bridges S.M."/>
            <person name="Lawrence M.L."/>
        </authorList>
    </citation>
    <scope>NUCLEOTIDE SEQUENCE [LARGE SCALE GENOMIC DNA]</scope>
    <source>
        <strain>HCC23</strain>
    </source>
</reference>
<evidence type="ECO:0000255" key="1">
    <source>
        <dbReference type="HAMAP-Rule" id="MF_01568"/>
    </source>
</evidence>
<dbReference type="EC" id="3.6.1.15" evidence="1"/>
<dbReference type="EC" id="3.6.1.6" evidence="1"/>
<dbReference type="EMBL" id="CP001175">
    <property type="protein sequence ID" value="ACK39228.1"/>
    <property type="molecule type" value="Genomic_DNA"/>
</dbReference>
<dbReference type="RefSeq" id="WP_003723875.1">
    <property type="nucleotide sequence ID" value="NC_011660.1"/>
</dbReference>
<dbReference type="SMR" id="B8DFN5"/>
<dbReference type="KEGG" id="lmh:LMHCC_0877"/>
<dbReference type="HOGENOM" id="CLU_109787_1_0_9"/>
<dbReference type="GO" id="GO:0000287">
    <property type="term" value="F:magnesium ion binding"/>
    <property type="evidence" value="ECO:0007669"/>
    <property type="project" value="UniProtKB-UniRule"/>
</dbReference>
<dbReference type="GO" id="GO:0017110">
    <property type="term" value="F:nucleoside diphosphate phosphatase activity"/>
    <property type="evidence" value="ECO:0007669"/>
    <property type="project" value="UniProtKB-UniRule"/>
</dbReference>
<dbReference type="GO" id="GO:0017111">
    <property type="term" value="F:ribonucleoside triphosphate phosphatase activity"/>
    <property type="evidence" value="ECO:0007669"/>
    <property type="project" value="UniProtKB-UniRule"/>
</dbReference>
<dbReference type="Gene3D" id="2.40.380.10">
    <property type="entry name" value="FomD-like"/>
    <property type="match status" value="1"/>
</dbReference>
<dbReference type="HAMAP" id="MF_01568">
    <property type="entry name" value="Ntdp"/>
    <property type="match status" value="1"/>
</dbReference>
<dbReference type="InterPro" id="IPR007295">
    <property type="entry name" value="DUF402"/>
</dbReference>
<dbReference type="InterPro" id="IPR035930">
    <property type="entry name" value="FomD-like_sf"/>
</dbReference>
<dbReference type="InterPro" id="IPR050212">
    <property type="entry name" value="Ntdp-like"/>
</dbReference>
<dbReference type="InterPro" id="IPR016882">
    <property type="entry name" value="SA1684"/>
</dbReference>
<dbReference type="NCBIfam" id="NF010183">
    <property type="entry name" value="PRK13662.1"/>
    <property type="match status" value="1"/>
</dbReference>
<dbReference type="PANTHER" id="PTHR39159">
    <property type="match status" value="1"/>
</dbReference>
<dbReference type="PANTHER" id="PTHR39159:SF1">
    <property type="entry name" value="UPF0374 PROTEIN YGAC"/>
    <property type="match status" value="1"/>
</dbReference>
<dbReference type="Pfam" id="PF04167">
    <property type="entry name" value="DUF402"/>
    <property type="match status" value="1"/>
</dbReference>
<dbReference type="PIRSF" id="PIRSF028345">
    <property type="entry name" value="UCP028345"/>
    <property type="match status" value="1"/>
</dbReference>
<dbReference type="SUPFAM" id="SSF159234">
    <property type="entry name" value="FomD-like"/>
    <property type="match status" value="1"/>
</dbReference>
<gene>
    <name type="ordered locus">LMHCC_0877</name>
</gene>